<name>YL11A_YEAST</name>
<protein>
    <recommendedName>
        <fullName>Transposon Ty1-LR1 Gag polyprotein</fullName>
    </recommendedName>
    <alternativeName>
        <fullName>Gag-p49</fullName>
    </alternativeName>
    <alternativeName>
        <fullName>Transposon Ty1 protein A</fullName>
        <shortName>TY1A</shortName>
        <shortName>TYA</shortName>
    </alternativeName>
    <alternativeName>
        <fullName>p58</fullName>
    </alternativeName>
    <component>
        <recommendedName>
            <fullName>Capsid protein</fullName>
            <shortName>CA</shortName>
        </recommendedName>
        <alternativeName>
            <fullName>Gag-p45</fullName>
        </alternativeName>
        <alternativeName>
            <fullName>p54</fullName>
        </alternativeName>
    </component>
    <component>
        <recommendedName>
            <fullName>Gag-p4</fullName>
        </recommendedName>
    </component>
</protein>
<sequence length="440" mass="49129">MESQQLSNYPHISHGSACASVTSKEVHTNQDPLDVSASKIQEYDKASTKANSQQTTTPASSAVPENPHHASPQPASVPPPQNGPYPQQCMMTQNQANPSGWSFYGHPSMIPYTPYQMSPMYFPPGPQSQFPQYPSSVGTPLSTPSPESGNTFTDSSSADSDMTSTKKYVRPPPMLTSPNDFPNWVKTYIKFLQNSNLGGIIPTVNGKPVRQITDDELTFLYNTFQIFAPSQFLPTWVKDILSVDYTDIMKILSKSIEKMQSDTQEANDIVTLANLQYNGSTPADAFETKVTNIIDRLNNNGIHINNKVACQLIMRGLSGEYKFLRYTRHRHLNMTVAELFLDIHAIYEEQQGSRNSKPNYRRNPSDEKNDSRSYTNTTKPKVIARNPQKTNNSKSKTARAHNVSTSNNSPSTDNDSISKSTTEPIQLNNKHDLHLRPETY</sequence>
<feature type="chain" id="PRO_0000409785" description="Transposon Ty1-LR1 Gag polyprotein">
    <location>
        <begin position="1"/>
        <end position="440"/>
    </location>
</feature>
<feature type="chain" id="PRO_0000409786" description="Capsid protein" evidence="1">
    <location>
        <begin position="1"/>
        <end position="401"/>
    </location>
</feature>
<feature type="peptide" id="PRO_0000409787" description="Gag-p4" evidence="1">
    <location>
        <begin position="402"/>
        <end position="440"/>
    </location>
</feature>
<feature type="region of interest" description="Disordered" evidence="3">
    <location>
        <begin position="1"/>
        <end position="93"/>
    </location>
</feature>
<feature type="region of interest" description="Disordered" evidence="3">
    <location>
        <begin position="126"/>
        <end position="173"/>
    </location>
</feature>
<feature type="region of interest" description="RNA-binding" evidence="1">
    <location>
        <begin position="299"/>
        <end position="401"/>
    </location>
</feature>
<feature type="region of interest" description="Disordered" evidence="3">
    <location>
        <begin position="352"/>
        <end position="440"/>
    </location>
</feature>
<feature type="compositionally biased region" description="Polar residues" evidence="3">
    <location>
        <begin position="1"/>
        <end position="10"/>
    </location>
</feature>
<feature type="compositionally biased region" description="Polar residues" evidence="3">
    <location>
        <begin position="48"/>
        <end position="60"/>
    </location>
</feature>
<feature type="compositionally biased region" description="Polar residues" evidence="3">
    <location>
        <begin position="127"/>
        <end position="152"/>
    </location>
</feature>
<feature type="compositionally biased region" description="Low complexity" evidence="3">
    <location>
        <begin position="153"/>
        <end position="165"/>
    </location>
</feature>
<feature type="compositionally biased region" description="Low complexity" evidence="3">
    <location>
        <begin position="402"/>
        <end position="418"/>
    </location>
</feature>
<feature type="compositionally biased region" description="Polar residues" evidence="3">
    <location>
        <begin position="419"/>
        <end position="428"/>
    </location>
</feature>
<feature type="compositionally biased region" description="Basic and acidic residues" evidence="3">
    <location>
        <begin position="429"/>
        <end position="440"/>
    </location>
</feature>
<feature type="site" description="Cleavage; by Ty1 protease" evidence="1">
    <location>
        <begin position="401"/>
        <end position="402"/>
    </location>
</feature>
<feature type="modified residue" description="Phosphoserine" evidence="2">
    <location>
        <position position="416"/>
    </location>
</feature>
<keyword id="KW-0963">Cytoplasm</keyword>
<keyword id="KW-0597">Phosphoprotein</keyword>
<keyword id="KW-1185">Reference proteome</keyword>
<keyword id="KW-0688">Ribosomal frameshifting</keyword>
<keyword id="KW-0694">RNA-binding</keyword>
<keyword id="KW-0814">Transposable element</keyword>
<proteinExistence type="evidence at transcript level"/>
<organism>
    <name type="scientific">Saccharomyces cerevisiae (strain ATCC 204508 / S288c)</name>
    <name type="common">Baker's yeast</name>
    <dbReference type="NCBI Taxonomy" id="559292"/>
    <lineage>
        <taxon>Eukaryota</taxon>
        <taxon>Fungi</taxon>
        <taxon>Dikarya</taxon>
        <taxon>Ascomycota</taxon>
        <taxon>Saccharomycotina</taxon>
        <taxon>Saccharomycetes</taxon>
        <taxon>Saccharomycetales</taxon>
        <taxon>Saccharomycetaceae</taxon>
        <taxon>Saccharomyces</taxon>
    </lineage>
</organism>
<gene>
    <name type="primary">TY1A-LR1</name>
    <name type="synonym">YLRCTy1-1 GAG</name>
    <name type="ordered locus">YLR035C-B</name>
    <name type="ORF">L1823</name>
</gene>
<reference key="1">
    <citation type="journal article" date="1997" name="Nature">
        <title>The nucleotide sequence of Saccharomyces cerevisiae chromosome XII.</title>
        <authorList>
            <person name="Johnston M."/>
            <person name="Hillier L.W."/>
            <person name="Riles L."/>
            <person name="Albermann K."/>
            <person name="Andre B."/>
            <person name="Ansorge W."/>
            <person name="Benes V."/>
            <person name="Brueckner M."/>
            <person name="Delius H."/>
            <person name="Dubois E."/>
            <person name="Duesterhoeft A."/>
            <person name="Entian K.-D."/>
            <person name="Floeth M."/>
            <person name="Goffeau A."/>
            <person name="Hebling U."/>
            <person name="Heumann K."/>
            <person name="Heuss-Neitzel D."/>
            <person name="Hilbert H."/>
            <person name="Hilger F."/>
            <person name="Kleine K."/>
            <person name="Koetter P."/>
            <person name="Louis E.J."/>
            <person name="Messenguy F."/>
            <person name="Mewes H.-W."/>
            <person name="Miosga T."/>
            <person name="Moestl D."/>
            <person name="Mueller-Auer S."/>
            <person name="Nentwich U."/>
            <person name="Obermaier B."/>
            <person name="Piravandi E."/>
            <person name="Pohl T.M."/>
            <person name="Portetelle D."/>
            <person name="Purnelle B."/>
            <person name="Rechmann S."/>
            <person name="Rieger M."/>
            <person name="Rinke M."/>
            <person name="Rose M."/>
            <person name="Scharfe M."/>
            <person name="Scherens B."/>
            <person name="Scholler P."/>
            <person name="Schwager C."/>
            <person name="Schwarz S."/>
            <person name="Underwood A.P."/>
            <person name="Urrestarazu L.A."/>
            <person name="Vandenbol M."/>
            <person name="Verhasselt P."/>
            <person name="Vierendeels F."/>
            <person name="Voet M."/>
            <person name="Volckaert G."/>
            <person name="Voss H."/>
            <person name="Wambutt R."/>
            <person name="Wedler E."/>
            <person name="Wedler H."/>
            <person name="Zimmermann F.K."/>
            <person name="Zollner A."/>
            <person name="Hani J."/>
            <person name="Hoheisel J.D."/>
        </authorList>
    </citation>
    <scope>NUCLEOTIDE SEQUENCE [LARGE SCALE GENOMIC DNA]</scope>
    <source>
        <strain>ATCC 204508 / S288c</strain>
    </source>
</reference>
<reference key="2">
    <citation type="journal article" date="2014" name="G3 (Bethesda)">
        <title>The reference genome sequence of Saccharomyces cerevisiae: Then and now.</title>
        <authorList>
            <person name="Engel S.R."/>
            <person name="Dietrich F.S."/>
            <person name="Fisk D.G."/>
            <person name="Binkley G."/>
            <person name="Balakrishnan R."/>
            <person name="Costanzo M.C."/>
            <person name="Dwight S.S."/>
            <person name="Hitz B.C."/>
            <person name="Karra K."/>
            <person name="Nash R.S."/>
            <person name="Weng S."/>
            <person name="Wong E.D."/>
            <person name="Lloyd P."/>
            <person name="Skrzypek M.S."/>
            <person name="Miyasato S.R."/>
            <person name="Simison M."/>
            <person name="Cherry J.M."/>
        </authorList>
    </citation>
    <scope>GENOME REANNOTATION</scope>
    <source>
        <strain>ATCC 204508 / S288c</strain>
    </source>
</reference>
<reference key="3">
    <citation type="journal article" date="1998" name="Genome Res.">
        <title>Transposable elements and genome organization: a comprehensive survey of retrotransposons revealed by the complete Saccharomyces cerevisiae genome sequence.</title>
        <authorList>
            <person name="Kim J.M."/>
            <person name="Vanguri S."/>
            <person name="Boeke J.D."/>
            <person name="Gabriel A."/>
            <person name="Voytas D.F."/>
        </authorList>
    </citation>
    <scope>NOMENCLATURE</scope>
</reference>
<reference key="4">
    <citation type="journal article" date="2002" name="Mol. Cell. Biol.">
        <title>Differential effects of chromatin and Gcn4 on the 50-fold range of expression among individual yeast Ty1 retrotransposons.</title>
        <authorList>
            <person name="Morillon A."/>
            <person name="Benard L."/>
            <person name="Springer M."/>
            <person name="Lesage P."/>
        </authorList>
    </citation>
    <scope>INDUCTION</scope>
</reference>
<reference key="5">
    <citation type="journal article" date="2005" name="Cytogenet. Genome Res.">
        <title>Happy together: the life and times of Ty retrotransposons and their hosts.</title>
        <authorList>
            <person name="Lesage P."/>
            <person name="Todeschini A.L."/>
        </authorList>
    </citation>
    <scope>REVIEW</scope>
</reference>
<accession>P0CX68</accession>
<accession>D3DM68</accession>
<accession>Q12231</accession>
<comment type="function">
    <text evidence="1">Capsid protein (CA) is the structural component of the virus-like particle (VLP), forming the shell that encapsulates the retrotransposons dimeric RNA genome. The particles are assembled from trimer-clustered units and there are holes in the capsid shells that allow for the diffusion of macromolecules. CA also has nucleocapsid-like chaperone activity, promoting primer tRNA(i)-Met annealing to the multipartite primer-binding site (PBS), dimerization of Ty1 RNA and initiation of reverse transcription (By similarity).</text>
</comment>
<comment type="subunit">
    <text evidence="1">Homotrimer.</text>
</comment>
<comment type="subcellular location">
    <subcellularLocation>
        <location evidence="1">Cytoplasm</location>
    </subcellularLocation>
</comment>
<comment type="alternative products">
    <event type="ribosomal frameshifting"/>
    <isoform>
        <id>P0CX68-1</id>
        <name>Transposon Ty1-LR1 Gag polyprotein</name>
        <sequence type="displayed"/>
    </isoform>
    <isoform>
        <id>Q12088-1</id>
        <name>Transposon Ty1-LR1 Gag-Pol polyprotein</name>
        <sequence type="external"/>
    </isoform>
    <text evidence="1">The Gag-Pol polyprotein is generated by a +1 ribosomal frameshift between the codons for Leu-435 and Gly-436. The ratio of Gag:Gag-Pol varies between 20:1 and 5:1 (By similarity).</text>
</comment>
<comment type="induction">
    <text evidence="4">Ty1-LR1 is a weakly expressed element. Induced under amino acid starvation conditions by GCN4.</text>
</comment>
<comment type="domain">
    <text evidence="1">The C-terminal RNA-binding region of CA is sufficient for all its nucleocapsid-like chaperone activities.</text>
</comment>
<comment type="miscellaneous">
    <text>Retrotransposons are mobile genetic entities that are able to replicate via an RNA intermediate and a reverse transcription step. In contrast to retroviruses, retrotransposons are non-infectious, lack an envelope and remain intracellular. Ty1 retrotransposons belong to the copia elements (pseudoviridae).</text>
</comment>
<comment type="miscellaneous">
    <molecule>Isoform Transposon Ty1-LR1 Gag polyprotein</molecule>
    <text>Produced by conventional translation.</text>
</comment>
<dbReference type="EMBL" id="Z73207">
    <property type="protein sequence ID" value="CAA97561.1"/>
    <property type="molecule type" value="Genomic_DNA"/>
</dbReference>
<dbReference type="EMBL" id="Z73208">
    <property type="protein sequence ID" value="CAA97564.1"/>
    <property type="molecule type" value="Genomic_DNA"/>
</dbReference>
<dbReference type="EMBL" id="BK006945">
    <property type="status" value="NOT_ANNOTATED_CDS"/>
    <property type="molecule type" value="Genomic_DNA"/>
</dbReference>
<dbReference type="PIR" id="S53588">
    <property type="entry name" value="S53588"/>
</dbReference>
<dbReference type="RefSeq" id="NP_013766.1">
    <molecule id="P0CX68-1"/>
    <property type="nucleotide sequence ID" value="NM_001182548.1"/>
</dbReference>
<dbReference type="RefSeq" id="NP_058151.1">
    <molecule id="P0CX68-1"/>
    <property type="nucleotide sequence ID" value="NM_001184424.1"/>
</dbReference>
<dbReference type="RefSeq" id="NP_058156.1">
    <molecule id="P0CX68-1"/>
    <property type="nucleotide sequence ID" value="NM_001184429.1"/>
</dbReference>
<dbReference type="RefSeq" id="NP_058166.1">
    <molecule id="P0CX68-1"/>
    <property type="nucleotide sequence ID" value="NM_001184399.1"/>
</dbReference>
<dbReference type="SMR" id="P0CX68"/>
<dbReference type="BioGRID" id="32371">
    <property type="interactions" value="2"/>
</dbReference>
<dbReference type="BioGRID" id="33412">
    <property type="interactions" value="5"/>
</dbReference>
<dbReference type="BioGRID" id="35226">
    <property type="interactions" value="5"/>
</dbReference>
<dbReference type="BioGRID" id="36913">
    <property type="interactions" value="2"/>
</dbReference>
<dbReference type="GlyGen" id="P0CX68">
    <property type="glycosylation" value="2 sites"/>
</dbReference>
<dbReference type="KEGG" id="sce:YDR316W-A"/>
<dbReference type="KEGG" id="sce:YER159C-A"/>
<dbReference type="KEGG" id="sce:YGR161C-C"/>
<dbReference type="KEGG" id="sce:YMR051C"/>
<dbReference type="VEuPathDB" id="FungiDB:YDR316W-A"/>
<dbReference type="VEuPathDB" id="FungiDB:YER159C-A"/>
<dbReference type="VEuPathDB" id="FungiDB:YGR161C-C"/>
<dbReference type="VEuPathDB" id="FungiDB:YMR051C"/>
<dbReference type="HOGENOM" id="CLU_045291_1_0_1"/>
<dbReference type="InParanoid" id="P0CX68"/>
<dbReference type="OrthoDB" id="4046078at2759"/>
<dbReference type="Proteomes" id="UP000002311">
    <property type="component" value="Chromosome XII"/>
</dbReference>
<dbReference type="RNAct" id="P0CX68">
    <property type="molecule type" value="protein"/>
</dbReference>
<dbReference type="GO" id="GO:0005737">
    <property type="term" value="C:cytoplasm"/>
    <property type="evidence" value="ECO:0007669"/>
    <property type="project" value="UniProtKB-SubCell"/>
</dbReference>
<dbReference type="GO" id="GO:0003723">
    <property type="term" value="F:RNA binding"/>
    <property type="evidence" value="ECO:0007669"/>
    <property type="project" value="UniProtKB-KW"/>
</dbReference>
<dbReference type="GO" id="GO:0075523">
    <property type="term" value="P:viral translational frameshifting"/>
    <property type="evidence" value="ECO:0007669"/>
    <property type="project" value="UniProtKB-KW"/>
</dbReference>
<dbReference type="InterPro" id="IPR015820">
    <property type="entry name" value="TYA"/>
</dbReference>
<dbReference type="Pfam" id="PF01021">
    <property type="entry name" value="TYA"/>
    <property type="match status" value="1"/>
</dbReference>
<evidence type="ECO:0000250" key="1"/>
<evidence type="ECO:0000250" key="2">
    <source>
        <dbReference type="UniProtKB" id="Q12441"/>
    </source>
</evidence>
<evidence type="ECO:0000256" key="3">
    <source>
        <dbReference type="SAM" id="MobiDB-lite"/>
    </source>
</evidence>
<evidence type="ECO:0000269" key="4">
    <source>
    </source>
</evidence>